<name>XCT_HUMAN</name>
<feature type="chain" id="PRO_0000054279" description="Cystine/glutamate transporter">
    <location>
        <begin position="1"/>
        <end position="501"/>
    </location>
</feature>
<feature type="topological domain" description="Cytoplasmic" evidence="14">
    <location>
        <begin position="1"/>
        <end position="43"/>
    </location>
</feature>
<feature type="transmembrane region" description="Helical" evidence="14">
    <location>
        <begin position="44"/>
        <end position="64"/>
    </location>
</feature>
<feature type="topological domain" description="Extracellular" evidence="14">
    <location>
        <begin position="65"/>
        <end position="74"/>
    </location>
</feature>
<feature type="transmembrane region" description="Helical" evidence="14">
    <location>
        <begin position="75"/>
        <end position="95"/>
    </location>
</feature>
<feature type="topological domain" description="Cytoplasmic" evidence="14">
    <location>
        <begin position="96"/>
        <end position="101"/>
    </location>
</feature>
<feature type="intramembrane region" evidence="14">
    <location>
        <begin position="102"/>
        <end position="116"/>
    </location>
</feature>
<feature type="topological domain" description="Cytoplasmic" evidence="14">
    <location>
        <begin position="117"/>
        <end position="130"/>
    </location>
</feature>
<feature type="transmembrane region" description="Helical" evidence="14">
    <location>
        <begin position="131"/>
        <end position="150"/>
    </location>
</feature>
<feature type="topological domain" description="Extracellular" evidence="14">
    <location>
        <begin position="151"/>
        <end position="163"/>
    </location>
</feature>
<feature type="transmembrane region" description="Helical" evidence="14">
    <location>
        <begin position="164"/>
        <end position="179"/>
    </location>
</feature>
<feature type="topological domain" description="Cytoplasmic" evidence="14">
    <location>
        <begin position="180"/>
        <end position="193"/>
    </location>
</feature>
<feature type="transmembrane region" description="Helical" evidence="14">
    <location>
        <begin position="194"/>
        <end position="210"/>
    </location>
</feature>
<feature type="topological domain" description="Extracellular" evidence="14">
    <location>
        <begin position="211"/>
        <end position="234"/>
    </location>
</feature>
<feature type="transmembrane region" description="Helical" evidence="14">
    <location>
        <begin position="235"/>
        <end position="255"/>
    </location>
</feature>
<feature type="topological domain" description="Cytoplasmic" evidence="14">
    <location>
        <begin position="256"/>
        <end position="265"/>
    </location>
</feature>
<feature type="transmembrane region" description="Helical" evidence="14">
    <location>
        <begin position="266"/>
        <end position="286"/>
    </location>
</feature>
<feature type="topological domain" description="Extracellular" evidence="14">
    <location>
        <begin position="287"/>
        <end position="317"/>
    </location>
</feature>
<feature type="transmembrane region" description="Helical" evidence="14">
    <location>
        <begin position="318"/>
        <end position="338"/>
    </location>
</feature>
<feature type="topological domain" description="Cytoplasmic" evidence="14">
    <location>
        <begin position="339"/>
        <end position="364"/>
    </location>
</feature>
<feature type="transmembrane region" description="Helical" evidence="14">
    <location>
        <begin position="365"/>
        <end position="385"/>
    </location>
</feature>
<feature type="topological domain" description="Extracellular" evidence="14">
    <location>
        <begin position="386"/>
        <end position="387"/>
    </location>
</feature>
<feature type="transmembrane region" description="Helical" evidence="14">
    <location>
        <begin position="388"/>
        <end position="408"/>
    </location>
</feature>
<feature type="topological domain" description="Cytoplasmic" evidence="14">
    <location>
        <begin position="409"/>
        <end position="422"/>
    </location>
</feature>
<feature type="transmembrane region" description="Helical" evidence="14">
    <location>
        <begin position="423"/>
        <end position="443"/>
    </location>
</feature>
<feature type="topological domain" description="Extracellular" evidence="14">
    <location>
        <begin position="444"/>
        <end position="449"/>
    </location>
</feature>
<feature type="transmembrane region" description="Helical" evidence="14">
    <location>
        <begin position="450"/>
        <end position="470"/>
    </location>
</feature>
<feature type="topological domain" description="Cytoplasmic" evidence="14">
    <location>
        <begin position="471"/>
        <end position="501"/>
    </location>
</feature>
<feature type="binding site" evidence="9 17">
    <location>
        <position position="135"/>
    </location>
    <ligand>
        <name>L-glutamate</name>
        <dbReference type="ChEBI" id="CHEBI:29985"/>
    </ligand>
</feature>
<feature type="binding site" evidence="9 17">
    <location>
        <position position="244"/>
    </location>
    <ligand>
        <name>L-glutamate</name>
        <dbReference type="ChEBI" id="CHEBI:29985"/>
    </ligand>
</feature>
<feature type="modified residue" description="Phosphoserine" evidence="19 20 21">
    <location>
        <position position="26"/>
    </location>
</feature>
<feature type="glycosylation site" description="N-linked (GlcNAc...) asparagine" evidence="2">
    <location>
        <position position="314"/>
    </location>
</feature>
<feature type="disulfide bond" description="Interchain (with C-210 in SLC3A2)" evidence="11">
    <location>
        <position position="158"/>
    </location>
</feature>
<feature type="mutagenesis site" description="Does not affect L-cystine transport activity; when associated with S-158; S-197; S-271; S-327; S-414 and S-435. Does not affect affinity for L-cystine; when associated with S-158; S-197; S-271; S-327; S-414 and S-435. Significantly increases L-glutamate affinity; when associated with S-158; S-197; S-271; S-327; S-414 and S-435. Does not affect inhibition of L-glutamate transport activity by p-chloromercuribenzoic acid and p-chloromercuribenzenesulfonic acid." evidence="6 7">
    <original>C</original>
    <variation>S</variation>
    <location>
        <position position="86"/>
    </location>
</feature>
<feature type="mutagenesis site" description="Loss of L-cystine transport activity." evidence="9">
    <original>R</original>
    <variation>A</variation>
    <location>
        <position position="135"/>
    </location>
</feature>
<feature type="mutagenesis site" description="Loss of L-cystine transport activity." evidence="9">
    <original>R</original>
    <variation>K</variation>
    <location>
        <position position="135"/>
    </location>
</feature>
<feature type="mutagenesis site" description="Does not affect L-cystine transport activity; when associated with S-86; S-197; S-271; S-327; S-414 and S-435. Does not affect affinity for L-cystine; when associated with S-86; S-197; S-271; S-327; S-414 and S-435. Does not affect affinity for L-cystine; when associated with S-86; S-197; S-271; S-327; S-414 and S-435. Significantly increases L-glutamate affinity; when associated with S-86; S-197; S-271; S-327; S-414 and S-435. Does not affect inhibition of L-glutamate transport activity by p-chloromercuribenzoic acid and p-chloromercuribenzenesulfonic acid." evidence="6 7">
    <original>C</original>
    <variation>S</variation>
    <location>
        <position position="158"/>
    </location>
</feature>
<feature type="mutagenesis site" description="Increases sensitivity to erastin-induced ferroptosis." evidence="11">
    <original>Q</original>
    <variation>A</variation>
    <location>
        <position position="191"/>
    </location>
</feature>
<feature type="mutagenesis site" description="Does not affect L-cystine transport activity; when associated with S-86; S-158; S-271; S-327; S-414 and S-435. Does not affect affinity for L-cystine; when associated with S-86; S-158; S-271; S-327; S-414 and S-435. Significantly increases L-glutamate affinity; when associated with S-86; S-158; S-271; S-327; S-414 and S-435." evidence="7">
    <original>C</original>
    <variation>S</variation>
    <location>
        <position position="197"/>
    </location>
</feature>
<feature type="mutagenesis site" description="Loss of L-cystine transport activity. Does not affect location at the celle membrane. Does not affect expression level." evidence="9">
    <original>K</original>
    <variation>A</variation>
    <location>
        <position position="198"/>
    </location>
</feature>
<feature type="mutagenesis site" description="Increases resistance to erastin-induced ferroptosis. Decreases sensitivity to erastin-induced inhibition of L-cystine transport activity." evidence="11">
    <original>F</original>
    <variation>A</variation>
    <location>
        <position position="254"/>
    </location>
</feature>
<feature type="mutagenesis site" description="Does not affect L-cystine transport activity; when associated with S-86; S-158; S-197; S-327; S-414 and S-435. Does not affect affinity for L-cystine; when associated with S-86; S-158; S-197; S-327; S-414 and S-435. Significantly increases L-glutamate affinity; when associated with S-86; S-158; S-197; S-327; S-414 and S-435. Does not affect inhibition of L-glutamate transport activity by p-chloromercuribenzoic acid and p-chloromercuribenzenesulfonic acid." evidence="6 7">
    <original>C</original>
    <variation>S</variation>
    <location>
        <position position="271"/>
    </location>
</feature>
<feature type="mutagenesis site" description="Does not affect L-glutamate transport activity. Does not affect location at cell membrane Does not affect expression level." evidence="6">
    <original>C</original>
    <variation>A</variation>
    <location>
        <position position="327"/>
    </location>
</feature>
<feature type="mutagenesis site" description="Loss of L-glutamate transport activity. Does not affect location at cell membrane. Does not affect expression level." evidence="6">
    <original>C</original>
    <variation>L</variation>
    <location>
        <position position="327"/>
    </location>
</feature>
<feature type="mutagenesis site" description="Does not affect L-cystine transport activity; when associated with S-86; S-158; S-197; S-271; S-414 and S-435. Does not affect affinity for L-cystine; when associated with S-86; S-158; S-197; S-271; S-414 and S-435. Significantly increases L-glutamate affinity; when associated with S-86; S-158; S-197; S-271; S-414 and S-435. Loss of inhibitio nof L-glutamate transport activity by p-chloromercuribenzoic acid and p-chloromercuribenzenesulfonic acid. Decrease L-glutamate transport activity. Does not affect location at cell membrane. Does not affect expression level." evidence="6 7">
    <original>C</original>
    <variation>S</variation>
    <location>
        <position position="327"/>
    </location>
</feature>
<feature type="mutagenesis site" description="Does not affect L-glutamate transport activity. Does not affect location at cell membrane. Does not affect expression level." evidence="6">
    <original>C</original>
    <variation>T</variation>
    <location>
        <position position="327"/>
    </location>
</feature>
<feature type="mutagenesis site" description="Decreases L-cystine transport activity about 50%. Increases sensitivity to erastin-induced ferroptosis. Significantly decreases the L-cystine transport activity." evidence="9 11">
    <original>F</original>
    <variation>A</variation>
    <location>
        <position position="336"/>
    </location>
</feature>
<feature type="mutagenesis site" description="Does not affect L-cystine transport activity." evidence="9">
    <original>F</original>
    <variation>Y</variation>
    <location>
        <position position="336"/>
    </location>
</feature>
<feature type="mutagenesis site" description="Loss of L-cystine transport activity." evidence="9">
    <original>R</original>
    <variation>A</variation>
    <location>
        <position position="396"/>
    </location>
</feature>
<feature type="mutagenesis site" description="Loss of L-cystine transport activity." evidence="9">
    <original>R</original>
    <variation>K</variation>
    <location>
        <position position="396"/>
    </location>
</feature>
<feature type="mutagenesis site" description="Loss of L-cystine transport activity." evidence="9">
    <original>R</original>
    <variation>N</variation>
    <location>
        <position position="396"/>
    </location>
</feature>
<feature type="mutagenesis site" description="Does not affect L-cystine transport activity; when associated with S-86; S-158; S-197; S-271; S-327 and S-435. Does not affect affinity for L-cystine; when associated with S-86; S-158; S-197; S-271; S-327 and S-435. Significantly increases L-glutamate affinity; when associated with S-86; S-158; S-197; S-271; S-327 and S-435. Does not affect inhibition of L-glutamate transport activity by p-chloromercuribenzoic acid and p-chloromercuribenzenesulfonic acid." evidence="6 7">
    <original>C</original>
    <variation>S</variation>
    <location>
        <position position="414"/>
    </location>
</feature>
<feature type="mutagenesis site" description="Does not affect L-cystine transport activity; when associated with S-86; S-158; S-197; S-271; S-327 and S-414. Does not affect affinity for L-cystine; when associated with S-86; S-158; S-197; S-271; S-327 and S-414. Significantly increases L-glutamate affinity; when associated with S-86; S-158; S-197; S-271; S-327 and S-414. Does not affect inhibition of L-glutamate transport activity by p-chloromercuribenzoic acid and p-chloromercuribenzenesulfonic acid." evidence="6 7">
    <original>C</original>
    <variation>S</variation>
    <location>
        <position position="435"/>
    </location>
</feature>
<feature type="helix" evidence="22">
    <location>
        <begin position="46"/>
        <end position="57"/>
    </location>
</feature>
<feature type="helix" evidence="22">
    <location>
        <begin position="61"/>
        <end position="71"/>
    </location>
</feature>
<feature type="helix" evidence="22">
    <location>
        <begin position="76"/>
        <end position="104"/>
    </location>
</feature>
<feature type="strand" evidence="22">
    <location>
        <begin position="106"/>
        <end position="109"/>
    </location>
</feature>
<feature type="helix" evidence="22">
    <location>
        <begin position="111"/>
        <end position="114"/>
    </location>
</feature>
<feature type="turn" evidence="22">
    <location>
        <begin position="115"/>
        <end position="117"/>
    </location>
</feature>
<feature type="helix" evidence="22">
    <location>
        <begin position="122"/>
        <end position="132"/>
    </location>
</feature>
<feature type="helix" evidence="22">
    <location>
        <begin position="134"/>
        <end position="148"/>
    </location>
</feature>
<feature type="helix" evidence="22">
    <location>
        <begin position="152"/>
        <end position="154"/>
    </location>
</feature>
<feature type="strand" evidence="23">
    <location>
        <begin position="155"/>
        <end position="158"/>
    </location>
</feature>
<feature type="helix" evidence="22">
    <location>
        <begin position="162"/>
        <end position="181"/>
    </location>
</feature>
<feature type="helix" evidence="22">
    <location>
        <begin position="184"/>
        <end position="206"/>
    </location>
</feature>
<feature type="turn" evidence="22">
    <location>
        <begin position="208"/>
        <end position="217"/>
    </location>
</feature>
<feature type="turn" evidence="22">
    <location>
        <begin position="222"/>
        <end position="225"/>
    </location>
</feature>
<feature type="helix" evidence="23">
    <location>
        <begin position="232"/>
        <end position="234"/>
    </location>
</feature>
<feature type="helix" evidence="22">
    <location>
        <begin position="235"/>
        <end position="243"/>
    </location>
</feature>
<feature type="helix" evidence="22">
    <location>
        <begin position="244"/>
        <end position="246"/>
    </location>
</feature>
<feature type="helix" evidence="22">
    <location>
        <begin position="249"/>
        <end position="251"/>
    </location>
</feature>
<feature type="turn" evidence="23">
    <location>
        <begin position="256"/>
        <end position="258"/>
    </location>
</feature>
<feature type="strand" evidence="22">
    <location>
        <begin position="259"/>
        <end position="261"/>
    </location>
</feature>
<feature type="turn" evidence="22">
    <location>
        <begin position="262"/>
        <end position="264"/>
    </location>
</feature>
<feature type="helix" evidence="22">
    <location>
        <begin position="265"/>
        <end position="289"/>
    </location>
</feature>
<feature type="turn" evidence="22">
    <location>
        <begin position="294"/>
        <end position="298"/>
    </location>
</feature>
<feature type="helix" evidence="22">
    <location>
        <begin position="303"/>
        <end position="308"/>
    </location>
</feature>
<feature type="helix" evidence="22">
    <location>
        <begin position="319"/>
        <end position="332"/>
    </location>
</feature>
<feature type="turn" evidence="22">
    <location>
        <begin position="336"/>
        <end position="338"/>
    </location>
</feature>
<feature type="helix" evidence="22">
    <location>
        <begin position="339"/>
        <end position="346"/>
    </location>
</feature>
<feature type="turn" evidence="22">
    <location>
        <begin position="347"/>
        <end position="349"/>
    </location>
</feature>
<feature type="turn" evidence="22">
    <location>
        <begin position="353"/>
        <end position="356"/>
    </location>
</feature>
<feature type="strand" evidence="22">
    <location>
        <begin position="358"/>
        <end position="362"/>
    </location>
</feature>
<feature type="helix" evidence="22">
    <location>
        <begin position="366"/>
        <end position="381"/>
    </location>
</feature>
<feature type="helix" evidence="22">
    <location>
        <begin position="385"/>
        <end position="412"/>
    </location>
</feature>
<feature type="helix" evidence="22">
    <location>
        <begin position="426"/>
        <end position="441"/>
    </location>
</feature>
<feature type="turn" evidence="22">
    <location>
        <begin position="442"/>
        <end position="444"/>
    </location>
</feature>
<feature type="helix" evidence="22">
    <location>
        <begin position="447"/>
        <end position="458"/>
    </location>
</feature>
<feature type="helix" evidence="22">
    <location>
        <begin position="461"/>
        <end position="463"/>
    </location>
</feature>
<feature type="turn" evidence="22">
    <location>
        <begin position="464"/>
        <end position="468"/>
    </location>
</feature>
<feature type="turn" evidence="23">
    <location>
        <begin position="474"/>
        <end position="477"/>
    </location>
</feature>
<feature type="helix" evidence="22">
    <location>
        <begin position="478"/>
        <end position="492"/>
    </location>
</feature>
<feature type="strand" evidence="23">
    <location>
        <begin position="494"/>
        <end position="497"/>
    </location>
</feature>
<sequence>MVRKPVVSTISKGGYLQGNVNGRLPSLGNKEPPGQEKVQLKRKVTLLRGVSIIIGTIIGAGIFISPKGVLQNTGSVGMSLTIWTVCGVLSLFGALSYAELGTTIKKSGGHYTYILEVFGPLPAFVRVWVELLIIRPAATAVISLAFGRYILEPFFIQCEIPELAIKLITAVGITVVMVLNSMSVSWSARIQIFLTFCKLTAILIIIVPGVMQLIKGQTQNFKDAFSGRDSSITRLPLAFYYGMYAYAGWFYLNFVTEEVENPEKTIPLAICISMAIVTIGYVLTNVAYFTTINAEELLLSNAVAVTFSERLLGNFSLAVPIFVALSCFGSMNGGVFAVSRLFYVASREGHLPEILSMIHVRKHTPLPAVIVLHPLTMIMLFSGDLDSLLNFLSFARWLFIGLAVAGLIYLRYKCPDMHRPFKVPLFIPALFSFTCLFMVALSLYSDPFSTGIGFVITLTGVPAYYLFIIWDKKPRWFRIMSEKITRTLQIILEVVPEEDKL</sequence>
<dbReference type="EMBL" id="AB026891">
    <property type="protein sequence ID" value="BAA82628.1"/>
    <property type="molecule type" value="mRNA"/>
</dbReference>
<dbReference type="EMBL" id="AF200708">
    <property type="protein sequence ID" value="AAG35592.1"/>
    <property type="molecule type" value="mRNA"/>
</dbReference>
<dbReference type="EMBL" id="AJ277882">
    <property type="protein sequence ID" value="CAC81905.1"/>
    <property type="molecule type" value="mRNA"/>
</dbReference>
<dbReference type="EMBL" id="AF252872">
    <property type="protein sequence ID" value="AAK49111.1"/>
    <property type="molecule type" value="mRNA"/>
</dbReference>
<dbReference type="EMBL" id="AK290359">
    <property type="protein sequence ID" value="BAF83048.1"/>
    <property type="molecule type" value="mRNA"/>
</dbReference>
<dbReference type="EMBL" id="AK314855">
    <property type="protein sequence ID" value="BAG37372.1"/>
    <property type="molecule type" value="mRNA"/>
</dbReference>
<dbReference type="EMBL" id="CH471056">
    <property type="protein sequence ID" value="EAX05135.1"/>
    <property type="molecule type" value="Genomic_DNA"/>
</dbReference>
<dbReference type="EMBL" id="BC012087">
    <property type="protein sequence ID" value="AAH12087.1"/>
    <property type="molecule type" value="mRNA"/>
</dbReference>
<dbReference type="CCDS" id="CCDS3742.1"/>
<dbReference type="RefSeq" id="NP_055146.1">
    <property type="nucleotide sequence ID" value="NM_014331.4"/>
</dbReference>
<dbReference type="PDB" id="7CCS">
    <property type="method" value="EM"/>
    <property type="resolution" value="6.20 A"/>
    <property type="chains" value="B=1-501"/>
</dbReference>
<dbReference type="PDB" id="7EPZ">
    <property type="method" value="EM"/>
    <property type="resolution" value="3.40 A"/>
    <property type="chains" value="B=2-501"/>
</dbReference>
<dbReference type="PDB" id="7P9U">
    <property type="method" value="EM"/>
    <property type="resolution" value="3.70 A"/>
    <property type="chains" value="B=2-501"/>
</dbReference>
<dbReference type="PDB" id="7P9V">
    <property type="method" value="EM"/>
    <property type="resolution" value="3.40 A"/>
    <property type="chains" value="B=2-501"/>
</dbReference>
<dbReference type="PDBsum" id="7CCS"/>
<dbReference type="PDBsum" id="7EPZ"/>
<dbReference type="PDBsum" id="7P9U"/>
<dbReference type="PDBsum" id="7P9V"/>
<dbReference type="EMDB" id="EMD-13266"/>
<dbReference type="EMDB" id="EMD-13267"/>
<dbReference type="EMDB" id="EMD-31251"/>
<dbReference type="SMR" id="Q9UPY5"/>
<dbReference type="BioGRID" id="117179">
    <property type="interactions" value="144"/>
</dbReference>
<dbReference type="ComplexPortal" id="CPX-8190">
    <property type="entry name" value="XCT-4F2 heteromeric amino acid transporter complex"/>
</dbReference>
<dbReference type="FunCoup" id="Q9UPY5">
    <property type="interactions" value="230"/>
</dbReference>
<dbReference type="IntAct" id="Q9UPY5">
    <property type="interactions" value="39"/>
</dbReference>
<dbReference type="MINT" id="Q9UPY5"/>
<dbReference type="STRING" id="9606.ENSP00000280612"/>
<dbReference type="BindingDB" id="Q9UPY5"/>
<dbReference type="ChEMBL" id="CHEMBL1075149"/>
<dbReference type="DrugBank" id="DB06151">
    <property type="generic name" value="Acetylcysteine"/>
</dbReference>
<dbReference type="DrugBank" id="DB05540">
    <property type="generic name" value="Alanosine"/>
</dbReference>
<dbReference type="DrugBank" id="DB00138">
    <property type="generic name" value="Cystine"/>
</dbReference>
<dbReference type="DrugBank" id="DB00142">
    <property type="generic name" value="Glutamic acid"/>
</dbReference>
<dbReference type="DrugBank" id="DB00740">
    <property type="generic name" value="Riluzole"/>
</dbReference>
<dbReference type="DrugBank" id="DB01098">
    <property type="generic name" value="Rosuvastatin"/>
</dbReference>
<dbReference type="DrugBank" id="DB00795">
    <property type="generic name" value="Sulfasalazine"/>
</dbReference>
<dbReference type="DrugBank" id="DB08833">
    <property type="generic name" value="Taurochenodeoxycholic acid"/>
</dbReference>
<dbReference type="DrugBank" id="DB04348">
    <property type="generic name" value="Taurocholic acid"/>
</dbReference>
<dbReference type="DrugBank" id="DB08834">
    <property type="generic name" value="Tauroursodeoxycholic acid"/>
</dbReference>
<dbReference type="DrugBank" id="DB11590">
    <property type="generic name" value="Thimerosal"/>
</dbReference>
<dbReference type="DrugCentral" id="Q9UPY5"/>
<dbReference type="GuidetoPHARMACOLOGY" id="902"/>
<dbReference type="TCDB" id="2.A.3.8.18">
    <property type="family name" value="the amino acid-polyamine-organocation (apc) family"/>
</dbReference>
<dbReference type="GlyCosmos" id="Q9UPY5">
    <property type="glycosylation" value="1 site, No reported glycans"/>
</dbReference>
<dbReference type="GlyGen" id="Q9UPY5">
    <property type="glycosylation" value="2 sites, 1 O-linked glycan (1 site)"/>
</dbReference>
<dbReference type="iPTMnet" id="Q9UPY5"/>
<dbReference type="PhosphoSitePlus" id="Q9UPY5"/>
<dbReference type="SwissPalm" id="Q9UPY5"/>
<dbReference type="BioMuta" id="SLC7A11"/>
<dbReference type="DMDM" id="12585385"/>
<dbReference type="jPOST" id="Q9UPY5"/>
<dbReference type="MassIVE" id="Q9UPY5"/>
<dbReference type="PaxDb" id="9606-ENSP00000280612"/>
<dbReference type="PeptideAtlas" id="Q9UPY5"/>
<dbReference type="ProteomicsDB" id="85473"/>
<dbReference type="Pumba" id="Q9UPY5"/>
<dbReference type="Antibodypedia" id="16136">
    <property type="antibodies" value="338 antibodies from 35 providers"/>
</dbReference>
<dbReference type="DNASU" id="23657"/>
<dbReference type="Ensembl" id="ENST00000280612.9">
    <property type="protein sequence ID" value="ENSP00000280612.5"/>
    <property type="gene ID" value="ENSG00000151012.13"/>
</dbReference>
<dbReference type="GeneID" id="23657"/>
<dbReference type="KEGG" id="hsa:23657"/>
<dbReference type="MANE-Select" id="ENST00000280612.9">
    <property type="protein sequence ID" value="ENSP00000280612.5"/>
    <property type="RefSeq nucleotide sequence ID" value="NM_014331.4"/>
    <property type="RefSeq protein sequence ID" value="NP_055146.1"/>
</dbReference>
<dbReference type="UCSC" id="uc062zqn.1">
    <property type="organism name" value="human"/>
</dbReference>
<dbReference type="AGR" id="HGNC:11059"/>
<dbReference type="CTD" id="23657"/>
<dbReference type="DisGeNET" id="23657"/>
<dbReference type="GeneCards" id="SLC7A11"/>
<dbReference type="HGNC" id="HGNC:11059">
    <property type="gene designation" value="SLC7A11"/>
</dbReference>
<dbReference type="HPA" id="ENSG00000151012">
    <property type="expression patterns" value="Tissue enhanced (brain)"/>
</dbReference>
<dbReference type="MIM" id="607933">
    <property type="type" value="gene"/>
</dbReference>
<dbReference type="neXtProt" id="NX_Q9UPY5"/>
<dbReference type="OpenTargets" id="ENSG00000151012"/>
<dbReference type="PharmGKB" id="PA35919"/>
<dbReference type="VEuPathDB" id="HostDB:ENSG00000151012"/>
<dbReference type="eggNOG" id="KOG1287">
    <property type="taxonomic scope" value="Eukaryota"/>
</dbReference>
<dbReference type="GeneTree" id="ENSGT00940000160324"/>
<dbReference type="HOGENOM" id="CLU_007946_3_0_1"/>
<dbReference type="InParanoid" id="Q9UPY5"/>
<dbReference type="OMA" id="PHWVWVL"/>
<dbReference type="OrthoDB" id="10062876at2759"/>
<dbReference type="PAN-GO" id="Q9UPY5">
    <property type="GO annotations" value="2 GO annotations based on evolutionary models"/>
</dbReference>
<dbReference type="PhylomeDB" id="Q9UPY5"/>
<dbReference type="TreeFam" id="TF313355"/>
<dbReference type="BioCyc" id="MetaCyc:ENSG00000151012-MONOMER"/>
<dbReference type="PathwayCommons" id="Q9UPY5"/>
<dbReference type="Reactome" id="R-HSA-210991">
    <property type="pathway name" value="Basigin interactions"/>
</dbReference>
<dbReference type="Reactome" id="R-HSA-352230">
    <property type="pathway name" value="Amino acid transport across the plasma membrane"/>
</dbReference>
<dbReference type="Reactome" id="R-HSA-9818027">
    <property type="pathway name" value="NFE2L2 regulating anti-oxidant/detoxification enzymes"/>
</dbReference>
<dbReference type="SignaLink" id="Q9UPY5"/>
<dbReference type="SIGNOR" id="Q9UPY5"/>
<dbReference type="BioGRID-ORCS" id="23657">
    <property type="hits" value="24 hits in 1186 CRISPR screens"/>
</dbReference>
<dbReference type="ChiTaRS" id="SLC7A11">
    <property type="organism name" value="human"/>
</dbReference>
<dbReference type="GeneWiki" id="SLC7A11"/>
<dbReference type="GenomeRNAi" id="23657"/>
<dbReference type="Pharos" id="Q9UPY5">
    <property type="development level" value="Tchem"/>
</dbReference>
<dbReference type="PRO" id="PR:Q9UPY5"/>
<dbReference type="Proteomes" id="UP000005640">
    <property type="component" value="Chromosome 4"/>
</dbReference>
<dbReference type="RNAct" id="Q9UPY5">
    <property type="molecule type" value="protein"/>
</dbReference>
<dbReference type="Bgee" id="ENSG00000151012">
    <property type="expression patterns" value="Expressed in cranial nerve II and 178 other cell types or tissues"/>
</dbReference>
<dbReference type="ExpressionAtlas" id="Q9UPY5">
    <property type="expression patterns" value="baseline and differential"/>
</dbReference>
<dbReference type="GO" id="GO:0045177">
    <property type="term" value="C:apical part of cell"/>
    <property type="evidence" value="ECO:0007669"/>
    <property type="project" value="Ensembl"/>
</dbReference>
<dbReference type="GO" id="GO:0097449">
    <property type="term" value="C:astrocyte projection"/>
    <property type="evidence" value="ECO:0007669"/>
    <property type="project" value="Ensembl"/>
</dbReference>
<dbReference type="GO" id="GO:0031526">
    <property type="term" value="C:brush border membrane"/>
    <property type="evidence" value="ECO:0007669"/>
    <property type="project" value="Ensembl"/>
</dbReference>
<dbReference type="GO" id="GO:0009986">
    <property type="term" value="C:cell surface"/>
    <property type="evidence" value="ECO:0000314"/>
    <property type="project" value="UniProtKB"/>
</dbReference>
<dbReference type="GO" id="GO:0016020">
    <property type="term" value="C:membrane"/>
    <property type="evidence" value="ECO:0000304"/>
    <property type="project" value="ProtInc"/>
</dbReference>
<dbReference type="GO" id="GO:0031528">
    <property type="term" value="C:microvillus membrane"/>
    <property type="evidence" value="ECO:0007669"/>
    <property type="project" value="UniProtKB-SubCell"/>
</dbReference>
<dbReference type="GO" id="GO:0005886">
    <property type="term" value="C:plasma membrane"/>
    <property type="evidence" value="ECO:0000314"/>
    <property type="project" value="UniProtKB"/>
</dbReference>
<dbReference type="GO" id="GO:0015327">
    <property type="term" value="F:cystine:glutamate antiporter activity"/>
    <property type="evidence" value="ECO:0000314"/>
    <property type="project" value="UniProtKB"/>
</dbReference>
<dbReference type="GO" id="GO:0015179">
    <property type="term" value="F:L-amino acid transmembrane transporter activity"/>
    <property type="evidence" value="ECO:0000318"/>
    <property type="project" value="GO_Central"/>
</dbReference>
<dbReference type="GO" id="GO:0140926">
    <property type="term" value="F:L-kynurenine transmembrane transporter activity"/>
    <property type="evidence" value="ECO:0000314"/>
    <property type="project" value="UniProtKB"/>
</dbReference>
<dbReference type="GO" id="GO:0030534">
    <property type="term" value="P:adult behavior"/>
    <property type="evidence" value="ECO:0007669"/>
    <property type="project" value="Ensembl"/>
</dbReference>
<dbReference type="GO" id="GO:0003333">
    <property type="term" value="P:amino acid transmembrane transport"/>
    <property type="evidence" value="ECO:0000318"/>
    <property type="project" value="GO_Central"/>
</dbReference>
<dbReference type="GO" id="GO:0034599">
    <property type="term" value="P:cellular response to oxidative stress"/>
    <property type="evidence" value="ECO:0007669"/>
    <property type="project" value="Ensembl"/>
</dbReference>
<dbReference type="GO" id="GO:0140206">
    <property type="term" value="P:dipeptide import across plasma membrane"/>
    <property type="evidence" value="ECO:0007669"/>
    <property type="project" value="Ensembl"/>
</dbReference>
<dbReference type="GO" id="GO:0006749">
    <property type="term" value="P:glutathione metabolic process"/>
    <property type="evidence" value="ECO:0007669"/>
    <property type="project" value="Ensembl"/>
</dbReference>
<dbReference type="GO" id="GO:0034775">
    <property type="term" value="P:glutathione transmembrane transport"/>
    <property type="evidence" value="ECO:0007669"/>
    <property type="project" value="Ensembl"/>
</dbReference>
<dbReference type="GO" id="GO:0090461">
    <property type="term" value="P:intracellular glutamate homeostasis"/>
    <property type="evidence" value="ECO:0007669"/>
    <property type="project" value="Ensembl"/>
</dbReference>
<dbReference type="GO" id="GO:0015811">
    <property type="term" value="P:L-cystine transport"/>
    <property type="evidence" value="ECO:0000314"/>
    <property type="project" value="UniProtKB"/>
</dbReference>
<dbReference type="GO" id="GO:0098712">
    <property type="term" value="P:L-glutamate import across plasma membrane"/>
    <property type="evidence" value="ECO:0007669"/>
    <property type="project" value="Ensembl"/>
</dbReference>
<dbReference type="GO" id="GO:0015813">
    <property type="term" value="P:L-glutamate transmembrane transport"/>
    <property type="evidence" value="ECO:0000314"/>
    <property type="project" value="UniProtKB"/>
</dbReference>
<dbReference type="GO" id="GO:0140924">
    <property type="term" value="P:L-kynurenine transmembrane transport"/>
    <property type="evidence" value="ECO:0000314"/>
    <property type="project" value="UniProtKB"/>
</dbReference>
<dbReference type="GO" id="GO:0060173">
    <property type="term" value="P:limb development"/>
    <property type="evidence" value="ECO:0007669"/>
    <property type="project" value="Ensembl"/>
</dbReference>
<dbReference type="GO" id="GO:0048286">
    <property type="term" value="P:lung alveolus development"/>
    <property type="evidence" value="ECO:0007669"/>
    <property type="project" value="Ensembl"/>
</dbReference>
<dbReference type="GO" id="GO:0050804">
    <property type="term" value="P:modulation of chemical synaptic transmission"/>
    <property type="evidence" value="ECO:0007669"/>
    <property type="project" value="Ensembl"/>
</dbReference>
<dbReference type="GO" id="GO:0110076">
    <property type="term" value="P:negative regulation of ferroptosis"/>
    <property type="evidence" value="ECO:0000314"/>
    <property type="project" value="UniProtKB"/>
</dbReference>
<dbReference type="GO" id="GO:0070527">
    <property type="term" value="P:platelet aggregation"/>
    <property type="evidence" value="ECO:0007669"/>
    <property type="project" value="Ensembl"/>
</dbReference>
<dbReference type="GO" id="GO:1904717">
    <property type="term" value="P:regulation of AMPA glutamate receptor clustering"/>
    <property type="evidence" value="ECO:0007669"/>
    <property type="project" value="Ensembl"/>
</dbReference>
<dbReference type="GO" id="GO:0042127">
    <property type="term" value="P:regulation of cell population proliferation"/>
    <property type="evidence" value="ECO:0007669"/>
    <property type="project" value="Ensembl"/>
</dbReference>
<dbReference type="GO" id="GO:1900407">
    <property type="term" value="P:regulation of cellular response to oxidative stress"/>
    <property type="evidence" value="ECO:0007669"/>
    <property type="project" value="Ensembl"/>
</dbReference>
<dbReference type="GO" id="GO:1901494">
    <property type="term" value="P:regulation of cysteine metabolic process"/>
    <property type="evidence" value="ECO:0007669"/>
    <property type="project" value="Ensembl"/>
</dbReference>
<dbReference type="GO" id="GO:2000211">
    <property type="term" value="P:regulation of glutamate metabolic process"/>
    <property type="evidence" value="ECO:0007669"/>
    <property type="project" value="Ensembl"/>
</dbReference>
<dbReference type="GO" id="GO:1903786">
    <property type="term" value="P:regulation of glutathione biosynthetic process"/>
    <property type="evidence" value="ECO:0007669"/>
    <property type="project" value="Ensembl"/>
</dbReference>
<dbReference type="GO" id="GO:0048021">
    <property type="term" value="P:regulation of melanin biosynthetic process"/>
    <property type="evidence" value="ECO:0007669"/>
    <property type="project" value="Ensembl"/>
</dbReference>
<dbReference type="GO" id="GO:0033029">
    <property type="term" value="P:regulation of neutrophil apoptotic process"/>
    <property type="evidence" value="ECO:0007669"/>
    <property type="project" value="Ensembl"/>
</dbReference>
<dbReference type="GO" id="GO:0051223">
    <property type="term" value="P:regulation of protein transport"/>
    <property type="evidence" value="ECO:0007669"/>
    <property type="project" value="Ensembl"/>
</dbReference>
<dbReference type="GO" id="GO:0050807">
    <property type="term" value="P:regulation of synapse organization"/>
    <property type="evidence" value="ECO:0007669"/>
    <property type="project" value="Ensembl"/>
</dbReference>
<dbReference type="GO" id="GO:0051775">
    <property type="term" value="P:response to redox state"/>
    <property type="evidence" value="ECO:0007669"/>
    <property type="project" value="Ensembl"/>
</dbReference>
<dbReference type="GO" id="GO:0009636">
    <property type="term" value="P:response to toxic substance"/>
    <property type="evidence" value="ECO:0000314"/>
    <property type="project" value="UniProtKB"/>
</dbReference>
<dbReference type="GO" id="GO:0021756">
    <property type="term" value="P:striatum development"/>
    <property type="evidence" value="ECO:0007669"/>
    <property type="project" value="Ensembl"/>
</dbReference>
<dbReference type="GO" id="GO:0021591">
    <property type="term" value="P:ventricular system development"/>
    <property type="evidence" value="ECO:0007669"/>
    <property type="project" value="Ensembl"/>
</dbReference>
<dbReference type="GO" id="GO:0008542">
    <property type="term" value="P:visual learning"/>
    <property type="evidence" value="ECO:0007669"/>
    <property type="project" value="Ensembl"/>
</dbReference>
<dbReference type="FunFam" id="1.20.1740.10:FF:000027">
    <property type="entry name" value="cystine/glutamate transporter isoform X1"/>
    <property type="match status" value="1"/>
</dbReference>
<dbReference type="Gene3D" id="1.20.1740.10">
    <property type="entry name" value="Amino acid/polyamine transporter I"/>
    <property type="match status" value="1"/>
</dbReference>
<dbReference type="InterPro" id="IPR002293">
    <property type="entry name" value="AA/rel_permease1"/>
</dbReference>
<dbReference type="InterPro" id="IPR050598">
    <property type="entry name" value="AminoAcid_Transporter"/>
</dbReference>
<dbReference type="InterPro" id="IPR004760">
    <property type="entry name" value="L_AA_transporter"/>
</dbReference>
<dbReference type="NCBIfam" id="TIGR00911">
    <property type="entry name" value="2A0308"/>
    <property type="match status" value="1"/>
</dbReference>
<dbReference type="PANTHER" id="PTHR11785">
    <property type="entry name" value="AMINO ACID TRANSPORTER"/>
    <property type="match status" value="1"/>
</dbReference>
<dbReference type="PANTHER" id="PTHR11785:SF323">
    <property type="entry name" value="CYSTINE_GLUTAMATE TRANSPORTER"/>
    <property type="match status" value="1"/>
</dbReference>
<dbReference type="Pfam" id="PF13520">
    <property type="entry name" value="AA_permease_2"/>
    <property type="match status" value="1"/>
</dbReference>
<dbReference type="PIRSF" id="PIRSF006060">
    <property type="entry name" value="AA_transporter"/>
    <property type="match status" value="1"/>
</dbReference>
<accession>Q9UPY5</accession>
<accession>A8K2U4</accession>
<protein>
    <recommendedName>
        <fullName evidence="13">Cystine/glutamate transporter</fullName>
    </recommendedName>
    <alternativeName>
        <fullName>Amino acid transport system xc-</fullName>
    </alternativeName>
    <alternativeName>
        <fullName>Calcium channel blocker resistance protein CCBR1</fullName>
    </alternativeName>
    <alternativeName>
        <fullName>Solute carrier family 7 member 11</fullName>
    </alternativeName>
    <alternativeName>
        <fullName evidence="12">xCT</fullName>
    </alternativeName>
</protein>
<evidence type="ECO:0000250" key="1">
    <source>
        <dbReference type="UniProtKB" id="Q9WTR6"/>
    </source>
</evidence>
<evidence type="ECO:0000255" key="2"/>
<evidence type="ECO:0000269" key="3">
    <source>
    </source>
</evidence>
<evidence type="ECO:0000269" key="4">
    <source>
    </source>
</evidence>
<evidence type="ECO:0000269" key="5">
    <source>
    </source>
</evidence>
<evidence type="ECO:0000269" key="6">
    <source>
    </source>
</evidence>
<evidence type="ECO:0000269" key="7">
    <source>
    </source>
</evidence>
<evidence type="ECO:0000269" key="8">
    <source>
    </source>
</evidence>
<evidence type="ECO:0000269" key="9">
    <source>
    </source>
</evidence>
<evidence type="ECO:0000269" key="10">
    <source>
    </source>
</evidence>
<evidence type="ECO:0000269" key="11">
    <source>
    </source>
</evidence>
<evidence type="ECO:0000303" key="12">
    <source>
    </source>
</evidence>
<evidence type="ECO:0000305" key="13"/>
<evidence type="ECO:0000305" key="14">
    <source>
    </source>
</evidence>
<evidence type="ECO:0000312" key="15">
    <source>
        <dbReference type="HGNC" id="HGNC:11059"/>
    </source>
</evidence>
<evidence type="ECO:0007744" key="16">
    <source>
        <dbReference type="PDB" id="7EPZ"/>
    </source>
</evidence>
<evidence type="ECO:0007744" key="17">
    <source>
        <dbReference type="PDB" id="7P9U"/>
    </source>
</evidence>
<evidence type="ECO:0007744" key="18">
    <source>
        <dbReference type="PDB" id="7P9V"/>
    </source>
</evidence>
<evidence type="ECO:0007744" key="19">
    <source>
    </source>
</evidence>
<evidence type="ECO:0007744" key="20">
    <source>
    </source>
</evidence>
<evidence type="ECO:0007744" key="21">
    <source>
    </source>
</evidence>
<evidence type="ECO:0007829" key="22">
    <source>
        <dbReference type="PDB" id="7EPZ"/>
    </source>
</evidence>
<evidence type="ECO:0007829" key="23">
    <source>
        <dbReference type="PDB" id="7P9V"/>
    </source>
</evidence>
<gene>
    <name evidence="15" type="primary">SLC7A11</name>
</gene>
<reference key="1">
    <citation type="journal article" date="2000" name="Antioxid. Redox Signal.">
        <title>Molecular cloning and expression of human xCT, the light chain of amino acid transport system xc-.</title>
        <authorList>
            <person name="Sato H."/>
            <person name="Tamba M."/>
            <person name="Kuriyama-Matsumura K."/>
            <person name="Okuno S."/>
            <person name="Bannai S."/>
        </authorList>
    </citation>
    <scope>NUCLEOTIDE SEQUENCE [MRNA]</scope>
    <scope>FUNCTION</scope>
    <scope>INDUCTION</scope>
</reference>
<reference key="2">
    <citation type="submission" date="1999-11" db="EMBL/GenBank/DDBJ databases">
        <title>CCBR1, novel CD98 light chain implicated in redox control and calcium signaling.</title>
        <authorList>
            <person name="Conklin D.S."/>
            <person name="Beach D.H."/>
        </authorList>
    </citation>
    <scope>NUCLEOTIDE SEQUENCE [MRNA]</scope>
</reference>
<reference key="3">
    <citation type="journal article" date="2001" name="Pflugers Arch.">
        <title>Identification and characterisation of human xCT that co-expresses, with 4F2 heavy chain, the amino acid transport activity system xc-.</title>
        <authorList>
            <person name="Bassi M.T."/>
            <person name="Gasol E."/>
            <person name="Manzoni M."/>
            <person name="Pineda M."/>
            <person name="Riboni M."/>
            <person name="Martin R."/>
            <person name="Zorzano A."/>
            <person name="Borsani G."/>
            <person name="Palacin M."/>
        </authorList>
    </citation>
    <scope>NUCLEOTIDE SEQUENCE [MRNA]</scope>
    <scope>FUNCTION</scope>
    <scope>TRANSPORTER ACTIVITY</scope>
    <scope>ACTIVITY REGULATION</scope>
    <scope>BIOPHYSICOCHEMICAL PROPERTIES</scope>
    <scope>SUBCELLULAR LOCATION</scope>
    <scope>TISSUE SPECIFICITY</scope>
</reference>
<reference key="4">
    <citation type="journal article" date="2001" name="Invest. Ophthalmol. Vis. Sci.">
        <title>Structure, function, and regulation of human cystine/glutamate transporter in retinal pigment epithelial cells.</title>
        <authorList>
            <person name="Bridges C.C."/>
            <person name="Kekuda R."/>
            <person name="Wang H."/>
            <person name="Prasad P.D."/>
            <person name="Mehta P."/>
            <person name="Huang W."/>
            <person name="Smith S.B."/>
            <person name="Ganapathy V."/>
        </authorList>
    </citation>
    <scope>NUCLEOTIDE SEQUENCE [MRNA]</scope>
    <scope>FUNCTION</scope>
    <scope>TRANSPORTER ACTIVITY</scope>
    <scope>BIOPHYSICOCHEMICAL PROPERTIES</scope>
    <scope>INDUCTION</scope>
    <source>
        <tissue>Placenta</tissue>
    </source>
</reference>
<reference key="5">
    <citation type="journal article" date="2004" name="Nat. Genet.">
        <title>Complete sequencing and characterization of 21,243 full-length human cDNAs.</title>
        <authorList>
            <person name="Ota T."/>
            <person name="Suzuki Y."/>
            <person name="Nishikawa T."/>
            <person name="Otsuki T."/>
            <person name="Sugiyama T."/>
            <person name="Irie R."/>
            <person name="Wakamatsu A."/>
            <person name="Hayashi K."/>
            <person name="Sato H."/>
            <person name="Nagai K."/>
            <person name="Kimura K."/>
            <person name="Makita H."/>
            <person name="Sekine M."/>
            <person name="Obayashi M."/>
            <person name="Nishi T."/>
            <person name="Shibahara T."/>
            <person name="Tanaka T."/>
            <person name="Ishii S."/>
            <person name="Yamamoto J."/>
            <person name="Saito K."/>
            <person name="Kawai Y."/>
            <person name="Isono Y."/>
            <person name="Nakamura Y."/>
            <person name="Nagahari K."/>
            <person name="Murakami K."/>
            <person name="Yasuda T."/>
            <person name="Iwayanagi T."/>
            <person name="Wagatsuma M."/>
            <person name="Shiratori A."/>
            <person name="Sudo H."/>
            <person name="Hosoiri T."/>
            <person name="Kaku Y."/>
            <person name="Kodaira H."/>
            <person name="Kondo H."/>
            <person name="Sugawara M."/>
            <person name="Takahashi M."/>
            <person name="Kanda K."/>
            <person name="Yokoi T."/>
            <person name="Furuya T."/>
            <person name="Kikkawa E."/>
            <person name="Omura Y."/>
            <person name="Abe K."/>
            <person name="Kamihara K."/>
            <person name="Katsuta N."/>
            <person name="Sato K."/>
            <person name="Tanikawa M."/>
            <person name="Yamazaki M."/>
            <person name="Ninomiya K."/>
            <person name="Ishibashi T."/>
            <person name="Yamashita H."/>
            <person name="Murakawa K."/>
            <person name="Fujimori K."/>
            <person name="Tanai H."/>
            <person name="Kimata M."/>
            <person name="Watanabe M."/>
            <person name="Hiraoka S."/>
            <person name="Chiba Y."/>
            <person name="Ishida S."/>
            <person name="Ono Y."/>
            <person name="Takiguchi S."/>
            <person name="Watanabe S."/>
            <person name="Yosida M."/>
            <person name="Hotuta T."/>
            <person name="Kusano J."/>
            <person name="Kanehori K."/>
            <person name="Takahashi-Fujii A."/>
            <person name="Hara H."/>
            <person name="Tanase T.-O."/>
            <person name="Nomura Y."/>
            <person name="Togiya S."/>
            <person name="Komai F."/>
            <person name="Hara R."/>
            <person name="Takeuchi K."/>
            <person name="Arita M."/>
            <person name="Imose N."/>
            <person name="Musashino K."/>
            <person name="Yuuki H."/>
            <person name="Oshima A."/>
            <person name="Sasaki N."/>
            <person name="Aotsuka S."/>
            <person name="Yoshikawa Y."/>
            <person name="Matsunawa H."/>
            <person name="Ichihara T."/>
            <person name="Shiohata N."/>
            <person name="Sano S."/>
            <person name="Moriya S."/>
            <person name="Momiyama H."/>
            <person name="Satoh N."/>
            <person name="Takami S."/>
            <person name="Terashima Y."/>
            <person name="Suzuki O."/>
            <person name="Nakagawa S."/>
            <person name="Senoh A."/>
            <person name="Mizoguchi H."/>
            <person name="Goto Y."/>
            <person name="Shimizu F."/>
            <person name="Wakebe H."/>
            <person name="Hishigaki H."/>
            <person name="Watanabe T."/>
            <person name="Sugiyama A."/>
            <person name="Takemoto M."/>
            <person name="Kawakami B."/>
            <person name="Yamazaki M."/>
            <person name="Watanabe K."/>
            <person name="Kumagai A."/>
            <person name="Itakura S."/>
            <person name="Fukuzumi Y."/>
            <person name="Fujimori Y."/>
            <person name="Komiyama M."/>
            <person name="Tashiro H."/>
            <person name="Tanigami A."/>
            <person name="Fujiwara T."/>
            <person name="Ono T."/>
            <person name="Yamada K."/>
            <person name="Fujii Y."/>
            <person name="Ozaki K."/>
            <person name="Hirao M."/>
            <person name="Ohmori Y."/>
            <person name="Kawabata A."/>
            <person name="Hikiji T."/>
            <person name="Kobatake N."/>
            <person name="Inagaki H."/>
            <person name="Ikema Y."/>
            <person name="Okamoto S."/>
            <person name="Okitani R."/>
            <person name="Kawakami T."/>
            <person name="Noguchi S."/>
            <person name="Itoh T."/>
            <person name="Shigeta K."/>
            <person name="Senba T."/>
            <person name="Matsumura K."/>
            <person name="Nakajima Y."/>
            <person name="Mizuno T."/>
            <person name="Morinaga M."/>
            <person name="Sasaki M."/>
            <person name="Togashi T."/>
            <person name="Oyama M."/>
            <person name="Hata H."/>
            <person name="Watanabe M."/>
            <person name="Komatsu T."/>
            <person name="Mizushima-Sugano J."/>
            <person name="Satoh T."/>
            <person name="Shirai Y."/>
            <person name="Takahashi Y."/>
            <person name="Nakagawa K."/>
            <person name="Okumura K."/>
            <person name="Nagase T."/>
            <person name="Nomura N."/>
            <person name="Kikuchi H."/>
            <person name="Masuho Y."/>
            <person name="Yamashita R."/>
            <person name="Nakai K."/>
            <person name="Yada T."/>
            <person name="Nakamura Y."/>
            <person name="Ohara O."/>
            <person name="Isogai T."/>
            <person name="Sugano S."/>
        </authorList>
    </citation>
    <scope>NUCLEOTIDE SEQUENCE [LARGE SCALE MRNA]</scope>
    <source>
        <tissue>Tongue</tissue>
    </source>
</reference>
<reference key="6">
    <citation type="submission" date="2005-09" db="EMBL/GenBank/DDBJ databases">
        <authorList>
            <person name="Mural R.J."/>
            <person name="Istrail S."/>
            <person name="Sutton G."/>
            <person name="Florea L."/>
            <person name="Halpern A.L."/>
            <person name="Mobarry C.M."/>
            <person name="Lippert R."/>
            <person name="Walenz B."/>
            <person name="Shatkay H."/>
            <person name="Dew I."/>
            <person name="Miller J.R."/>
            <person name="Flanigan M.J."/>
            <person name="Edwards N.J."/>
            <person name="Bolanos R."/>
            <person name="Fasulo D."/>
            <person name="Halldorsson B.V."/>
            <person name="Hannenhalli S."/>
            <person name="Turner R."/>
            <person name="Yooseph S."/>
            <person name="Lu F."/>
            <person name="Nusskern D.R."/>
            <person name="Shue B.C."/>
            <person name="Zheng X.H."/>
            <person name="Zhong F."/>
            <person name="Delcher A.L."/>
            <person name="Huson D.H."/>
            <person name="Kravitz S.A."/>
            <person name="Mouchard L."/>
            <person name="Reinert K."/>
            <person name="Remington K.A."/>
            <person name="Clark A.G."/>
            <person name="Waterman M.S."/>
            <person name="Eichler E.E."/>
            <person name="Adams M.D."/>
            <person name="Hunkapiller M.W."/>
            <person name="Myers E.W."/>
            <person name="Venter J.C."/>
        </authorList>
    </citation>
    <scope>NUCLEOTIDE SEQUENCE [LARGE SCALE GENOMIC DNA]</scope>
</reference>
<reference key="7">
    <citation type="journal article" date="2004" name="Genome Res.">
        <title>The status, quality, and expansion of the NIH full-length cDNA project: the Mammalian Gene Collection (MGC).</title>
        <authorList>
            <consortium name="The MGC Project Team"/>
        </authorList>
    </citation>
    <scope>NUCLEOTIDE SEQUENCE [LARGE SCALE MRNA]</scope>
    <source>
        <tissue>Kidney</tissue>
    </source>
</reference>
<reference key="8">
    <citation type="journal article" date="2004" name="J. Biol. Chem.">
        <title>Thiol modification of cysteine 327 in the eighth transmembrane domain of the light subunit xCT of the heteromeric cystine/glutamate antiporter suggests close proximity to the substrate binding site/permeation pathway.</title>
        <authorList>
            <person name="Jimenez-Vidal M."/>
            <person name="Gasol E."/>
            <person name="Zorzano A."/>
            <person name="Nunes V."/>
            <person name="Palacin M."/>
            <person name="Chillaron J."/>
        </authorList>
    </citation>
    <scope>FUNCTION</scope>
    <scope>TRANSPORTER ACTIVITY</scope>
    <scope>ACTIVITY REGULATION</scope>
    <scope>BIOPHYSICOCHEMICAL PROPERTIES</scope>
    <scope>MUTAGENESIS OF CYS-86; CYS-158; CYS-271; CYS-327; CYS-414 AND CYS-435</scope>
</reference>
<reference key="9">
    <citation type="journal article" date="2004" name="J. Biol. Chem.">
        <title>Membrane topology of system xc- light subunit reveals a re-entrant loop with substrate-restricted accessibility.</title>
        <authorList>
            <person name="Gasol E."/>
            <person name="Jimenez-Vidal M."/>
            <person name="Chillaron J."/>
            <person name="Zorzano A."/>
            <person name="Palacin M."/>
        </authorList>
    </citation>
    <scope>FUNCTION</scope>
    <scope>TRANSPORTER ACTIVITY</scope>
    <scope>BIOPHYSICOCHEMICAL PROPERTIES</scope>
    <scope>MEMBRANE TOPOLOGY</scope>
    <scope>SUBCELLULAR LOCATION</scope>
    <scope>MUTAGENESIS OF CYS-86; CYS-158; CYS-197; CYS-271; CYS-327; CYS-414 AND CYS-435</scope>
</reference>
<reference key="10">
    <citation type="journal article" date="2008" name="Mol. Cell">
        <title>Kinase-selective enrichment enables quantitative phosphoproteomics of the kinome across the cell cycle.</title>
        <authorList>
            <person name="Daub H."/>
            <person name="Olsen J.V."/>
            <person name="Bairlein M."/>
            <person name="Gnad F."/>
            <person name="Oppermann F.S."/>
            <person name="Korner R."/>
            <person name="Greff Z."/>
            <person name="Keri G."/>
            <person name="Stemmann O."/>
            <person name="Mann M."/>
        </authorList>
    </citation>
    <scope>PHOSPHORYLATION [LARGE SCALE ANALYSIS] AT SER-26</scope>
    <scope>IDENTIFICATION BY MASS SPECTROMETRY [LARGE SCALE ANALYSIS]</scope>
    <source>
        <tissue>Cervix carcinoma</tissue>
    </source>
</reference>
<reference key="11">
    <citation type="journal article" date="2009" name="Mol. Cell. Proteomics">
        <title>Large-scale proteomics analysis of the human kinome.</title>
        <authorList>
            <person name="Oppermann F.S."/>
            <person name="Gnad F."/>
            <person name="Olsen J.V."/>
            <person name="Hornberger R."/>
            <person name="Greff Z."/>
            <person name="Keri G."/>
            <person name="Mann M."/>
            <person name="Daub H."/>
        </authorList>
    </citation>
    <scope>PHOSPHORYLATION [LARGE SCALE ANALYSIS] AT SER-26</scope>
    <scope>IDENTIFICATION BY MASS SPECTROMETRY [LARGE SCALE ANALYSIS]</scope>
</reference>
<reference key="12">
    <citation type="journal article" date="2013" name="J. Proteome Res.">
        <title>Toward a comprehensive characterization of a human cancer cell phosphoproteome.</title>
        <authorList>
            <person name="Zhou H."/>
            <person name="Di Palma S."/>
            <person name="Preisinger C."/>
            <person name="Peng M."/>
            <person name="Polat A.N."/>
            <person name="Heck A.J."/>
            <person name="Mohammed S."/>
        </authorList>
    </citation>
    <scope>PHOSPHORYLATION [LARGE SCALE ANALYSIS] AT SER-26</scope>
    <scope>IDENTIFICATION BY MASS SPECTROMETRY [LARGE SCALE ANALYSIS]</scope>
    <source>
        <tissue>Cervix carcinoma</tissue>
        <tissue>Erythroleukemia</tissue>
    </source>
</reference>
<reference key="13">
    <citation type="journal article" date="2021" name="Placenta">
        <title>N-acetylcysteine, xCT and suppression of Maxi-chloride channel activity in human placenta.</title>
        <authorList>
            <person name="Lofthouse E.M."/>
            <person name="Manousopoulou A."/>
            <person name="Cleal J.K."/>
            <person name="O'Kelly I.M."/>
            <person name="Poore K.R."/>
            <person name="Garbis S.D."/>
            <person name="Lewis R.M."/>
        </authorList>
    </citation>
    <scope>FUNCTION</scope>
    <scope>TRANSPORTER ACTIVITY</scope>
    <scope>SUBCELLULAR LOCATION</scope>
    <scope>TISSUE SPECIFICITY</scope>
</reference>
<reference key="14">
    <citation type="journal article" date="2022" name="Mol. Cell">
        <title>Kynurenine importation by SLC7A11 propagates anti-ferroptotic signaling.</title>
        <authorList>
            <person name="Fiore A."/>
            <person name="Zeitler L."/>
            <person name="Russier M."/>
            <person name="Gross A."/>
            <person name="Hiller M.K."/>
            <person name="Parker J.L."/>
            <person name="Stier L."/>
            <person name="Koecher T."/>
            <person name="Newstead S."/>
            <person name="Murray P.J."/>
        </authorList>
    </citation>
    <scope>FUNCTION</scope>
    <scope>TRANSPORTER ACTIVITY</scope>
</reference>
<reference evidence="17 18" key="15">
    <citation type="journal article" date="2021" name="Nat. Commun.">
        <title>Molecular basis for redox control by the human cystine/glutamate antiporter system xc.</title>
        <authorList>
            <person name="Parker J.L."/>
            <person name="Deme J.C."/>
            <person name="Kolokouris D."/>
            <person name="Kuteyi G."/>
            <person name="Biggin P.C."/>
            <person name="Lea S.M."/>
            <person name="Newstead S."/>
        </authorList>
    </citation>
    <scope>STRUCTURE BY ELECTRON MICROSCOPY (3.40 ANGSTROMS) OF 2-501 IN COMPLEX WITH L-GLUTAMATE AND SLC3A2</scope>
    <scope>FUNCTION</scope>
    <scope>TRANSPORTER ACTIVITY</scope>
    <scope>MUTAGENESIS OF ARG-135; LYS-198; PHE-336 AND ARG-396</scope>
</reference>
<reference evidence="16" key="16">
    <citation type="journal article" date="2022" name="Cell Res.">
        <title>The structure of erastin-bound xCT-4F2hc complexreveals molecular mechanisms underlying erastin-induced ferroptosis.</title>
        <authorList>
            <person name="Yan R."/>
            <person name="Xie E."/>
            <person name="Li Y."/>
            <person name="Li J."/>
            <person name="Zhang Y."/>
            <person name="Chi X."/>
            <person name="Hu X."/>
            <person name="Xu L."/>
            <person name="Hou T."/>
            <person name="Stockwell B.R."/>
            <person name="Min J."/>
            <person name="Zhou Q."/>
            <person name="Wang F."/>
        </authorList>
    </citation>
    <scope>STRUCTURE BY ELECTRON MICROSCOPY (3.40 ANGSTROMS) OF 2-501 IN COMPLEX WITH SLC3A2 AND ERASTIN INHIBITOR</scope>
    <scope>FUNCTION</scope>
    <scope>TRANSPORTER ACTIVITY</scope>
    <scope>ACTIVITY REGULATION</scope>
    <scope>DISULFIDE BOND</scope>
    <scope>MUTAGENESIS OF GLN-191; PHE-254 AND PHE-336</scope>
</reference>
<proteinExistence type="evidence at protein level"/>
<organism>
    <name type="scientific">Homo sapiens</name>
    <name type="common">Human</name>
    <dbReference type="NCBI Taxonomy" id="9606"/>
    <lineage>
        <taxon>Eukaryota</taxon>
        <taxon>Metazoa</taxon>
        <taxon>Chordata</taxon>
        <taxon>Craniata</taxon>
        <taxon>Vertebrata</taxon>
        <taxon>Euteleostomi</taxon>
        <taxon>Mammalia</taxon>
        <taxon>Eutheria</taxon>
        <taxon>Euarchontoglires</taxon>
        <taxon>Primates</taxon>
        <taxon>Haplorrhini</taxon>
        <taxon>Catarrhini</taxon>
        <taxon>Hominidae</taxon>
        <taxon>Homo</taxon>
    </lineage>
</organism>
<comment type="function">
    <text evidence="1 3 5 6 7 8 9 10 11">Heterodimer with SLC3A2, that functions as an antiporter by mediating the exchange of extracellular anionic L-cystine and intracellular L-glutamate across the cellular plasma membrane (PubMed:11133847, PubMed:11417227, PubMed:14722095, PubMed:15151999, PubMed:34880232, PubMed:35245456, PubMed:35352032). Provides L-cystine for the maintenance of the redox balance between extracellular L-cystine and L-cysteine and for the maintenance of the intracellular levels of glutathione that is essential for cells protection from oxidative stress (By similarity). The transport is sodium-independent, electroneutral with a stoichiometry of 1:1, and is drove by the high intracellular concentration of L-glutamate and the intracellular reduction of L-cystine (PubMed:11133847, PubMed:11417227). In addition, mediates the import of L-kynurenine leading to anti-ferroptotic signaling propagation required to maintain L-cystine and glutathione homeostasis (PubMed:35245456). Moreover, mediates N-acetyl-L-cysteine uptake into the placenta leading to subsequently down-regulation of pathways associated with oxidative stress, inflammation and apoptosis (PubMed:34120018). In vitro can also transport L-aspartate (PubMed:11417227). May participate in astrocyte and meningeal cell proliferation during development and can provide neuroprotection by promoting glutathione synthesis and delivery from non-neuronal cells such as astrocytes and meningeal cells to immature neurons (By similarity). Controls the production of pheomelanin pigment directly (By similarity).</text>
</comment>
<comment type="catalytic activity">
    <reaction evidence="3 5 6 7 9 10 11">
        <text>L-cystine(out) + L-glutamate(in) = L-cystine(in) + L-glutamate(out)</text>
        <dbReference type="Rhea" id="RHEA:70995"/>
        <dbReference type="ChEBI" id="CHEBI:29985"/>
        <dbReference type="ChEBI" id="CHEBI:35491"/>
    </reaction>
</comment>
<comment type="catalytic activity">
    <reaction evidence="10">
        <text>an L-alpha-amino acid(in) + L-kynurenine(out) = an L-alpha-amino acid(out) + L-kynurenine(in)</text>
        <dbReference type="Rhea" id="RHEA:71191"/>
        <dbReference type="ChEBI" id="CHEBI:57959"/>
        <dbReference type="ChEBI" id="CHEBI:59869"/>
    </reaction>
</comment>
<comment type="catalytic activity">
    <reaction evidence="8">
        <text>N-acetyl-L-cysteine(out) + L-glutamate(in) = N-acetyl-L-cysteine(in) + L-glutamate(out)</text>
        <dbReference type="Rhea" id="RHEA:74567"/>
        <dbReference type="ChEBI" id="CHEBI:29985"/>
        <dbReference type="ChEBI" id="CHEBI:78236"/>
    </reaction>
</comment>
<comment type="activity regulation">
    <text evidence="5 6 11">Inhibited by erastin and sulfasalazine (PubMed:35352032). Inhibited by (S)-lactate (PubMed:11417227). Inactivated by p-chloromercuribenzoic acid and p-chloromercuribenzenesulfonic acid (PubMed:14722095).</text>
</comment>
<comment type="biophysicochemical properties">
    <kinetics>
        <KM evidence="3">48 uM for L-glutamate</KM>
        <KM evidence="7">224 uM for L-glutamate</KM>
        <KM evidence="7">110 uM for L-cystine</KM>
        <KM evidence="5">92 uM for L-glutamate</KM>
        <KM evidence="5">43 uM for L-cystine</KM>
        <KM evidence="6">173 uM for L-glutamate</KM>
        <Vmax evidence="7">6087.0 pmol/min/mg enzyme toward L-glutamate</Vmax>
        <Vmax evidence="7">9597.0 pmol/min/mg enzyme toward L-cystine</Vmax>
    </kinetics>
</comment>
<comment type="subunit">
    <text evidence="5 9">Disulfide-linked heterodimer with the amino acid transport protein SLC3A2/4F2hc; this interaction mediates cell membrane localization.</text>
</comment>
<comment type="interaction">
    <interactant intactId="EBI-3843348">
        <id>Q9UPY5</id>
    </interactant>
    <interactant intactId="EBI-490245">
        <id>P16070</id>
        <label>CD44</label>
    </interactant>
    <organismsDiffer>false</organismsDiffer>
    <experiments>4</experiments>
</comment>
<comment type="interaction">
    <interactant intactId="EBI-3843348">
        <id>Q9UPY5</id>
    </interactant>
    <interactant intactId="EBI-11959885">
        <id>Q07627</id>
        <label>KRTAP1-1</label>
    </interactant>
    <organismsDiffer>false</organismsDiffer>
    <experiments>3</experiments>
</comment>
<comment type="interaction">
    <interactant intactId="EBI-3843348">
        <id>Q9UPY5</id>
    </interactant>
    <interactant intactId="EBI-11749135">
        <id>Q8IUG1</id>
        <label>KRTAP1-3</label>
    </interactant>
    <organismsDiffer>false</organismsDiffer>
    <experiments>3</experiments>
</comment>
<comment type="interaction">
    <interactant intactId="EBI-3843348">
        <id>Q9UPY5</id>
    </interactant>
    <interactant intactId="EBI-702356">
        <id>P08195</id>
        <label>SLC3A2</label>
    </interactant>
    <organismsDiffer>false</organismsDiffer>
    <experiments>2</experiments>
</comment>
<comment type="interaction">
    <interactant intactId="EBI-3843348">
        <id>Q9UPY5</id>
    </interactant>
    <interactant intactId="EBI-12832276">
        <id>P08195-4</id>
        <label>SLC3A2</label>
    </interactant>
    <organismsDiffer>false</organismsDiffer>
    <experiments>3</experiments>
</comment>
<comment type="subcellular location">
    <subcellularLocation>
        <location evidence="5 7 9">Cell membrane</location>
        <topology evidence="7">Multi-pass membrane protein</topology>
    </subcellularLocation>
    <subcellularLocation>
        <location evidence="8">Cell projection</location>
        <location evidence="8">Microvillus membrane</location>
        <topology evidence="2">Multi-pass membrane protein</topology>
    </subcellularLocation>
    <text evidence="8">Localized to the microvillous membrane of the placental syncytiotrophoblast.</text>
</comment>
<comment type="tissue specificity">
    <text evidence="5 8">Expressed in term placenta and primary term cytotrophoblast (PubMed:34120018). Expressed mainly in the brain, but also in pancreas (PubMed:11417227).</text>
</comment>
<comment type="induction">
    <text evidence="3 4">By oxygen in a concentration-dependent manner (PubMed:11213471). Up-regulated by S-nitroso-N-acetyl-D-penicillamine (PubMed:11133847).</text>
</comment>
<comment type="PTM">
    <text evidence="1">Ubiquitinated by TRIM26; leading to proteasomal degradation.</text>
</comment>
<comment type="similarity">
    <text evidence="13">Belongs to the amino acid-polyamine-organocation (APC) superfamily. L-type amino acid transporter (LAT) (TC 2.A.3.8) family.</text>
</comment>
<comment type="caution">
    <text evidence="14">In the PMID:15151999, a typographical error has been introduced leading to L-cysteine spelling instead of L-cystine.</text>
</comment>
<keyword id="KW-0002">3D-structure</keyword>
<keyword id="KW-0029">Amino-acid transport</keyword>
<keyword id="KW-1003">Cell membrane</keyword>
<keyword id="KW-0966">Cell projection</keyword>
<keyword id="KW-1015">Disulfide bond</keyword>
<keyword id="KW-0325">Glycoprotein</keyword>
<keyword id="KW-0472">Membrane</keyword>
<keyword id="KW-0597">Phosphoprotein</keyword>
<keyword id="KW-1267">Proteomics identification</keyword>
<keyword id="KW-1185">Reference proteome</keyword>
<keyword id="KW-0812">Transmembrane</keyword>
<keyword id="KW-1133">Transmembrane helix</keyword>
<keyword id="KW-0813">Transport</keyword>
<keyword id="KW-0832">Ubl conjugation</keyword>